<dbReference type="EMBL" id="AF294616">
    <property type="protein sequence ID" value="AAG03074.1"/>
    <property type="molecule type" value="mRNA"/>
</dbReference>
<dbReference type="PIR" id="B19438">
    <property type="entry name" value="B19438"/>
</dbReference>
<dbReference type="RefSeq" id="NP_777048.1">
    <property type="nucleotide sequence ID" value="NM_174623.2"/>
</dbReference>
<dbReference type="PDB" id="1HJ0">
    <property type="method" value="NMR"/>
    <property type="chains" value="A=2-42"/>
</dbReference>
<dbReference type="PDBsum" id="1HJ0"/>
<dbReference type="BMRB" id="P21752"/>
<dbReference type="SMR" id="P21752"/>
<dbReference type="FunCoup" id="P21752">
    <property type="interactions" value="461"/>
</dbReference>
<dbReference type="IntAct" id="P21752">
    <property type="interactions" value="1"/>
</dbReference>
<dbReference type="STRING" id="9913.ENSBTAP00000007429"/>
<dbReference type="iPTMnet" id="P21752"/>
<dbReference type="PaxDb" id="9913-ENSBTAP00000007429"/>
<dbReference type="Ensembl" id="ENSBTAT00000007429.5">
    <property type="protein sequence ID" value="ENSBTAP00000007429.3"/>
    <property type="gene ID" value="ENSBTAG00000005654.5"/>
</dbReference>
<dbReference type="GeneID" id="282385"/>
<dbReference type="KEGG" id="bta:282385"/>
<dbReference type="CTD" id="9168"/>
<dbReference type="VEuPathDB" id="HostDB:ENSBTAG00000005654"/>
<dbReference type="eggNOG" id="KOG4794">
    <property type="taxonomic scope" value="Eukaryota"/>
</dbReference>
<dbReference type="GeneTree" id="ENSGT01130000278435"/>
<dbReference type="HOGENOM" id="CLU_208046_0_1_1"/>
<dbReference type="InParanoid" id="P21752"/>
<dbReference type="OrthoDB" id="2151618at2759"/>
<dbReference type="EvolutionaryTrace" id="P21752"/>
<dbReference type="Proteomes" id="UP000009136">
    <property type="component" value="Chromosome 11"/>
</dbReference>
<dbReference type="Bgee" id="ENSBTAG00000005654">
    <property type="expression patterns" value="Expressed in lung and 107 other cell types or tissues"/>
</dbReference>
<dbReference type="GO" id="GO:0005737">
    <property type="term" value="C:cytoplasm"/>
    <property type="evidence" value="ECO:0000318"/>
    <property type="project" value="GO_Central"/>
</dbReference>
<dbReference type="GO" id="GO:0005856">
    <property type="term" value="C:cytoskeleton"/>
    <property type="evidence" value="ECO:0007669"/>
    <property type="project" value="UniProtKB-SubCell"/>
</dbReference>
<dbReference type="GO" id="GO:0003785">
    <property type="term" value="F:actin monomer binding"/>
    <property type="evidence" value="ECO:0000318"/>
    <property type="project" value="GO_Central"/>
</dbReference>
<dbReference type="GO" id="GO:0007015">
    <property type="term" value="P:actin filament organization"/>
    <property type="evidence" value="ECO:0007669"/>
    <property type="project" value="InterPro"/>
</dbReference>
<dbReference type="GO" id="GO:0030334">
    <property type="term" value="P:regulation of cell migration"/>
    <property type="evidence" value="ECO:0000318"/>
    <property type="project" value="GO_Central"/>
</dbReference>
<dbReference type="FunFam" id="1.20.5.520:FF:000001">
    <property type="entry name" value="Thymosin beta"/>
    <property type="match status" value="1"/>
</dbReference>
<dbReference type="Gene3D" id="1.20.5.520">
    <property type="entry name" value="Single helix bin"/>
    <property type="match status" value="1"/>
</dbReference>
<dbReference type="InterPro" id="IPR001152">
    <property type="entry name" value="Beta-thymosin"/>
</dbReference>
<dbReference type="InterPro" id="IPR038386">
    <property type="entry name" value="Beta-thymosin_sf"/>
</dbReference>
<dbReference type="PANTHER" id="PTHR12021">
    <property type="entry name" value="THYMOSIN BETA"/>
    <property type="match status" value="1"/>
</dbReference>
<dbReference type="PANTHER" id="PTHR12021:SF10">
    <property type="entry name" value="THYMOSIN BETA-10"/>
    <property type="match status" value="1"/>
</dbReference>
<dbReference type="Pfam" id="PF01290">
    <property type="entry name" value="Thymosin"/>
    <property type="match status" value="1"/>
</dbReference>
<dbReference type="PIRSF" id="PIRSF001828">
    <property type="entry name" value="Thymosin_beta"/>
    <property type="match status" value="1"/>
</dbReference>
<dbReference type="SMART" id="SM00152">
    <property type="entry name" value="THY"/>
    <property type="match status" value="1"/>
</dbReference>
<dbReference type="PROSITE" id="PS00500">
    <property type="entry name" value="THYMOSIN_B4"/>
    <property type="match status" value="1"/>
</dbReference>
<sequence>MADKPDLGEINSFDKAKLKKTETQEKNTLPTKETIEQEKQAK</sequence>
<accession>P21752</accession>
<accession>Q9GMC3</accession>
<name>TYB10_BOVIN</name>
<evidence type="ECO:0000250" key="1"/>
<evidence type="ECO:0000250" key="2">
    <source>
        <dbReference type="UniProtKB" id="P63313"/>
    </source>
</evidence>
<evidence type="ECO:0000250" key="3">
    <source>
        <dbReference type="UniProtKB" id="Q6ZWY8"/>
    </source>
</evidence>
<evidence type="ECO:0000256" key="4">
    <source>
        <dbReference type="SAM" id="MobiDB-lite"/>
    </source>
</evidence>
<evidence type="ECO:0000269" key="5">
    <source>
    </source>
</evidence>
<evidence type="ECO:0000305" key="6"/>
<evidence type="ECO:0007829" key="7">
    <source>
        <dbReference type="PDB" id="1HJ0"/>
    </source>
</evidence>
<keyword id="KW-0002">3D-structure</keyword>
<keyword id="KW-0007">Acetylation</keyword>
<keyword id="KW-0009">Actin-binding</keyword>
<keyword id="KW-0963">Cytoplasm</keyword>
<keyword id="KW-0206">Cytoskeleton</keyword>
<keyword id="KW-0903">Direct protein sequencing</keyword>
<keyword id="KW-0597">Phosphoprotein</keyword>
<keyword id="KW-1185">Reference proteome</keyword>
<gene>
    <name type="primary">TMSB10</name>
</gene>
<feature type="initiator methionine" description="Removed" evidence="5">
    <location>
        <position position="1"/>
    </location>
</feature>
<feature type="chain" id="PRO_0000034302" description="Thymosin beta-10">
    <location>
        <begin position="2"/>
        <end position="42"/>
    </location>
</feature>
<feature type="peptide" id="PRO_0000034303" description="Thymosin beta-8">
    <location>
        <begin position="2"/>
        <end position="40"/>
    </location>
</feature>
<feature type="region of interest" description="Disordered" evidence="4">
    <location>
        <begin position="1"/>
        <end position="42"/>
    </location>
</feature>
<feature type="compositionally biased region" description="Basic and acidic residues" evidence="4">
    <location>
        <begin position="1"/>
        <end position="25"/>
    </location>
</feature>
<feature type="compositionally biased region" description="Basic and acidic residues" evidence="4">
    <location>
        <begin position="33"/>
        <end position="42"/>
    </location>
</feature>
<feature type="modified residue" description="N-acetylalanine" evidence="5">
    <location>
        <position position="2"/>
    </location>
</feature>
<feature type="modified residue" description="N6-acetyllysine" evidence="2">
    <location>
        <position position="4"/>
    </location>
</feature>
<feature type="modified residue" description="Phosphoserine" evidence="2">
    <location>
        <position position="12"/>
    </location>
</feature>
<feature type="modified residue" description="N6-acetyllysine" evidence="2">
    <location>
        <position position="15"/>
    </location>
</feature>
<feature type="modified residue" description="Phosphothreonine" evidence="3">
    <location>
        <position position="21"/>
    </location>
</feature>
<feature type="modified residue" description="Phosphothreonine" evidence="2">
    <location>
        <position position="23"/>
    </location>
</feature>
<feature type="modified residue" description="Phosphothreonine" evidence="2">
    <location>
        <position position="34"/>
    </location>
</feature>
<feature type="modified residue" description="N6-acetyllysine" evidence="2">
    <location>
        <position position="39"/>
    </location>
</feature>
<feature type="helix" evidence="7">
    <location>
        <begin position="6"/>
        <end position="28"/>
    </location>
</feature>
<feature type="strand" evidence="7">
    <location>
        <begin position="29"/>
        <end position="31"/>
    </location>
</feature>
<feature type="helix" evidence="7">
    <location>
        <begin position="33"/>
        <end position="41"/>
    </location>
</feature>
<protein>
    <recommendedName>
        <fullName>Thymosin beta-10</fullName>
    </recommendedName>
    <alternativeName>
        <fullName>Thymosin beta-9</fullName>
    </alternativeName>
    <component>
        <recommendedName>
            <fullName>Thymosin beta-8</fullName>
        </recommendedName>
    </component>
</protein>
<proteinExistence type="evidence at protein level"/>
<comment type="function">
    <text evidence="1">Plays an important role in the organization of the cytoskeleton. Binds to and sequesters actin monomers (G actin) and therefore inhibits actin polymerization (By similarity).</text>
</comment>
<comment type="subcellular location">
    <subcellularLocation>
        <location>Cytoplasm</location>
        <location>Cytoskeleton</location>
    </subcellularLocation>
</comment>
<comment type="tissue specificity">
    <text>Distributed in numerous types of tissues, including thymus, spleen, lung, liver and muscle.</text>
</comment>
<comment type="similarity">
    <text evidence="6">Belongs to the thymosin beta family.</text>
</comment>
<reference key="1">
    <citation type="submission" date="2000-08" db="EMBL/GenBank/DDBJ databases">
        <title>Bovine thymosin beta-10 full length cDNA sequence.</title>
        <authorList>
            <person name="Gutierrez-Pabello J.A."/>
            <person name="Adams L.G."/>
        </authorList>
    </citation>
    <scope>NUCLEOTIDE SEQUENCE [MRNA]</scope>
</reference>
<reference key="2">
    <citation type="journal article" date="1982" name="Proc. Natl. Acad. Sci. U.S.A.">
        <title>Thymosins beta 8 and beta 9: two new peptides isolated from calf thymus homologous to thymosin beta 4.</title>
        <authorList>
            <person name="Hannappel E."/>
            <person name="Davoust S."/>
            <person name="Horecker B.L."/>
        </authorList>
    </citation>
    <scope>PROTEIN SEQUENCE OF 2-42</scope>
    <scope>ACETYLATION AT ALA-2</scope>
    <source>
        <tissue>Thymus</tissue>
    </source>
</reference>
<reference key="3">
    <citation type="journal article" date="1986" name="Int. J. Pept. Protein Res.">
        <title>Solid phase synthesis of thymosin beta 9.</title>
        <authorList>
            <person name="Chandramouli N."/>
            <person name="Bhargava K.K."/>
            <person name="Incefy G.S."/>
            <person name="Modak M.J."/>
            <person name="Merrifield R.B."/>
        </authorList>
    </citation>
    <scope>SYNTHESIS</scope>
</reference>
<reference key="4">
    <citation type="book" date="1993" name="Peptides 1992">
        <title>A nuclear magnetic resonance and simulated annealing study of thymosin beta-9 in solution.</title>
        <editorList>
            <person name="Schneider C.H."/>
            <person name="Eberles A.N."/>
        </editorList>
        <authorList>
            <person name="Gallert B."/>
            <person name="Zarbock J."/>
            <person name="Voelter W."/>
            <person name="Holak T.A."/>
        </authorList>
    </citation>
    <scope>STRUCTURE BY NMR</scope>
</reference>
<reference key="5">
    <citation type="journal article" date="1997" name="Biopolymers">
        <title>Conformation of thymosin beta 9 in water/fluoroalcohol solution determined by NMR spectroscopy.</title>
        <authorList>
            <person name="Stoll R."/>
            <person name="Voelter W."/>
            <person name="Holak T.A."/>
        </authorList>
    </citation>
    <scope>STRUCTURE BY NMR</scope>
    <source>
        <tissue>Thymus</tissue>
    </source>
</reference>
<organism>
    <name type="scientific">Bos taurus</name>
    <name type="common">Bovine</name>
    <dbReference type="NCBI Taxonomy" id="9913"/>
    <lineage>
        <taxon>Eukaryota</taxon>
        <taxon>Metazoa</taxon>
        <taxon>Chordata</taxon>
        <taxon>Craniata</taxon>
        <taxon>Vertebrata</taxon>
        <taxon>Euteleostomi</taxon>
        <taxon>Mammalia</taxon>
        <taxon>Eutheria</taxon>
        <taxon>Laurasiatheria</taxon>
        <taxon>Artiodactyla</taxon>
        <taxon>Ruminantia</taxon>
        <taxon>Pecora</taxon>
        <taxon>Bovidae</taxon>
        <taxon>Bovinae</taxon>
        <taxon>Bos</taxon>
    </lineage>
</organism>